<keyword id="KW-0325">Glycoprotein</keyword>
<keyword id="KW-0472">Membrane</keyword>
<keyword id="KW-1185">Reference proteome</keyword>
<keyword id="KW-0769">Symport</keyword>
<keyword id="KW-0812">Transmembrane</keyword>
<keyword id="KW-1133">Transmembrane helix</keyword>
<keyword id="KW-0813">Transport</keyword>
<dbReference type="EMBL" id="X75950">
    <property type="protein sequence ID" value="CAA53552.1"/>
    <property type="molecule type" value="Genomic_DNA"/>
</dbReference>
<dbReference type="EMBL" id="Z28221">
    <property type="protein sequence ID" value="CAA82066.1"/>
    <property type="molecule type" value="Genomic_DNA"/>
</dbReference>
<dbReference type="EMBL" id="BK006944">
    <property type="protein sequence ID" value="DAA08948.2"/>
    <property type="molecule type" value="Genomic_DNA"/>
</dbReference>
<dbReference type="PIR" id="S38065">
    <property type="entry name" value="S38065"/>
</dbReference>
<dbReference type="RefSeq" id="NP_012701.2">
    <property type="nucleotide sequence ID" value="NM_001179786.2"/>
</dbReference>
<dbReference type="SMR" id="P36032"/>
<dbReference type="BioGRID" id="33944">
    <property type="interactions" value="42"/>
</dbReference>
<dbReference type="DIP" id="DIP-4126N"/>
<dbReference type="FunCoup" id="P36032">
    <property type="interactions" value="190"/>
</dbReference>
<dbReference type="IntAct" id="P36032">
    <property type="interactions" value="1"/>
</dbReference>
<dbReference type="MINT" id="P36032"/>
<dbReference type="STRING" id="4932.YKL221W"/>
<dbReference type="TCDB" id="2.A.1.13.18">
    <property type="family name" value="the major facilitator superfamily (mfs)"/>
</dbReference>
<dbReference type="GlyCosmos" id="P36032">
    <property type="glycosylation" value="1 site, No reported glycans"/>
</dbReference>
<dbReference type="GlyGen" id="P36032">
    <property type="glycosylation" value="1 site"/>
</dbReference>
<dbReference type="PaxDb" id="4932-YKL221W"/>
<dbReference type="PeptideAtlas" id="P36032"/>
<dbReference type="EnsemblFungi" id="YKL221W_mRNA">
    <property type="protein sequence ID" value="YKL221W"/>
    <property type="gene ID" value="YKL221W"/>
</dbReference>
<dbReference type="GeneID" id="853659"/>
<dbReference type="KEGG" id="sce:YKL221W"/>
<dbReference type="AGR" id="SGD:S000001704"/>
<dbReference type="SGD" id="S000001704">
    <property type="gene designation" value="MCH2"/>
</dbReference>
<dbReference type="VEuPathDB" id="FungiDB:YKL221W"/>
<dbReference type="eggNOG" id="KOG2504">
    <property type="taxonomic scope" value="Eukaryota"/>
</dbReference>
<dbReference type="HOGENOM" id="CLU_001265_1_2_1"/>
<dbReference type="InParanoid" id="P36032"/>
<dbReference type="OMA" id="YAWVCTF"/>
<dbReference type="OrthoDB" id="6499973at2759"/>
<dbReference type="BioCyc" id="YEAST:G3O-31976-MONOMER"/>
<dbReference type="Reactome" id="R-SCE-352230">
    <property type="pathway name" value="Amino acid transport across the plasma membrane"/>
</dbReference>
<dbReference type="Reactome" id="R-SCE-879518">
    <property type="pathway name" value="Transport of organic anions"/>
</dbReference>
<dbReference type="BioGRID-ORCS" id="853659">
    <property type="hits" value="0 hits in 10 CRISPR screens"/>
</dbReference>
<dbReference type="PRO" id="PR:P36032"/>
<dbReference type="Proteomes" id="UP000002311">
    <property type="component" value="Chromosome XI"/>
</dbReference>
<dbReference type="RNAct" id="P36032">
    <property type="molecule type" value="protein"/>
</dbReference>
<dbReference type="GO" id="GO:0005886">
    <property type="term" value="C:plasma membrane"/>
    <property type="evidence" value="ECO:0000318"/>
    <property type="project" value="GO_Central"/>
</dbReference>
<dbReference type="GO" id="GO:0015293">
    <property type="term" value="F:symporter activity"/>
    <property type="evidence" value="ECO:0007669"/>
    <property type="project" value="UniProtKB-KW"/>
</dbReference>
<dbReference type="GO" id="GO:0022857">
    <property type="term" value="F:transmembrane transporter activity"/>
    <property type="evidence" value="ECO:0000318"/>
    <property type="project" value="GO_Central"/>
</dbReference>
<dbReference type="CDD" id="cd17352">
    <property type="entry name" value="MFS_MCT_SLC16"/>
    <property type="match status" value="1"/>
</dbReference>
<dbReference type="FunFam" id="1.20.1250.20:FF:000623">
    <property type="entry name" value="Mch2p"/>
    <property type="match status" value="1"/>
</dbReference>
<dbReference type="Gene3D" id="1.20.1250.20">
    <property type="entry name" value="MFS general substrate transporter like domains"/>
    <property type="match status" value="2"/>
</dbReference>
<dbReference type="InterPro" id="IPR011701">
    <property type="entry name" value="MFS"/>
</dbReference>
<dbReference type="InterPro" id="IPR036259">
    <property type="entry name" value="MFS_trans_sf"/>
</dbReference>
<dbReference type="InterPro" id="IPR050327">
    <property type="entry name" value="Proton-linked_MCT"/>
</dbReference>
<dbReference type="PANTHER" id="PTHR11360">
    <property type="entry name" value="MONOCARBOXYLATE TRANSPORTER"/>
    <property type="match status" value="1"/>
</dbReference>
<dbReference type="PANTHER" id="PTHR11360:SF315">
    <property type="entry name" value="TRANSPORTER MCH2-RELATED"/>
    <property type="match status" value="1"/>
</dbReference>
<dbReference type="Pfam" id="PF07690">
    <property type="entry name" value="MFS_1"/>
    <property type="match status" value="1"/>
</dbReference>
<dbReference type="SUPFAM" id="SSF103473">
    <property type="entry name" value="MFS general substrate transporter"/>
    <property type="match status" value="1"/>
</dbReference>
<evidence type="ECO:0000255" key="1"/>
<evidence type="ECO:0000305" key="2"/>
<protein>
    <recommendedName>
        <fullName>Probable transporter MCH2</fullName>
    </recommendedName>
</protein>
<gene>
    <name type="primary">MCH2</name>
    <name type="ordered locus">YKL221W</name>
</gene>
<proteinExistence type="evidence at protein level"/>
<sequence>MSEERHEDHHRDVENKLNLNGKDDINGNTSISIEVPDGGYGWFILLAFILYNFSTWGANSGYAIYLAHYLENNTFAGGSKLDYASIGGLAFSCGLFFAPVITWLYHIFSIQFIIGLGILFQGAALLLAAFSVTLWEIYLTQGVLIGFGLAFIFIPSVTLIPLWFRNKRSLASGIGTAGSGLGGIVFNLGMQSILQKRGVKWALIAQCIICTSLSTIALMLTRTTHQGLRQHKRSYKFELLDYDVLSNFAVWLLFGFVSFAMLGYVVLLYSLSDFTVSLGYTSKQGSYVSCMVSVGSLLGRPIVGHIADKYGSLTVGMILHLVMAILCWAMWIPCKNLATAIAFGLLVGSIMGTIWPTIASIVTRIVGLQKLPGTFGSTWIFMAAFALVAPIIGLELRSTDTNGNDYYRTAIFVGFAYFGVSLCQWLLRGFIIARDEIAVREAYSADQNELHLNVKLSHMSKCLFRYKQLPRRV</sequence>
<organism>
    <name type="scientific">Saccharomyces cerevisiae (strain ATCC 204508 / S288c)</name>
    <name type="common">Baker's yeast</name>
    <dbReference type="NCBI Taxonomy" id="559292"/>
    <lineage>
        <taxon>Eukaryota</taxon>
        <taxon>Fungi</taxon>
        <taxon>Dikarya</taxon>
        <taxon>Ascomycota</taxon>
        <taxon>Saccharomycotina</taxon>
        <taxon>Saccharomycetes</taxon>
        <taxon>Saccharomycetales</taxon>
        <taxon>Saccharomycetaceae</taxon>
        <taxon>Saccharomyces</taxon>
    </lineage>
</organism>
<comment type="function">
    <text>Probable transporter. Does not act in the transport of monocarboxylic acids across the plasma membrane.</text>
</comment>
<comment type="subcellular location">
    <subcellularLocation>
        <location>Membrane</location>
        <topology>Multi-pass membrane protein</topology>
    </subcellularLocation>
</comment>
<comment type="similarity">
    <text evidence="2">Belongs to the major facilitator superfamily. Monocarboxylate porter (TC 2.A.1.13) family.</text>
</comment>
<feature type="chain" id="PRO_0000211403" description="Probable transporter MCH2">
    <location>
        <begin position="1"/>
        <end position="473"/>
    </location>
</feature>
<feature type="topological domain" description="Cytoplasmic" evidence="1">
    <location>
        <begin position="1"/>
        <end position="37"/>
    </location>
</feature>
<feature type="transmembrane region" description="Helical" evidence="1">
    <location>
        <begin position="38"/>
        <end position="58"/>
    </location>
</feature>
<feature type="topological domain" description="Extracellular" evidence="1">
    <location>
        <begin position="59"/>
        <end position="83"/>
    </location>
</feature>
<feature type="transmembrane region" description="Helical" evidence="1">
    <location>
        <begin position="84"/>
        <end position="105"/>
    </location>
</feature>
<feature type="topological domain" description="Cytoplasmic" evidence="1">
    <location>
        <begin position="106"/>
        <end position="111"/>
    </location>
</feature>
<feature type="transmembrane region" description="Helical" evidence="1">
    <location>
        <begin position="112"/>
        <end position="135"/>
    </location>
</feature>
<feature type="topological domain" description="Extracellular" evidence="1">
    <location>
        <begin position="136"/>
        <end position="141"/>
    </location>
</feature>
<feature type="transmembrane region" description="Helical" evidence="1">
    <location>
        <begin position="142"/>
        <end position="163"/>
    </location>
</feature>
<feature type="topological domain" description="Cytoplasmic" evidence="1">
    <location>
        <begin position="164"/>
        <end position="169"/>
    </location>
</feature>
<feature type="transmembrane region" description="Helical" evidence="1">
    <location>
        <begin position="170"/>
        <end position="186"/>
    </location>
</feature>
<feature type="topological domain" description="Extracellular" evidence="1">
    <location>
        <begin position="187"/>
        <end position="200"/>
    </location>
</feature>
<feature type="transmembrane region" description="Helical" evidence="1">
    <location>
        <begin position="201"/>
        <end position="220"/>
    </location>
</feature>
<feature type="topological domain" description="Cytoplasmic" evidence="1">
    <location>
        <begin position="221"/>
        <end position="243"/>
    </location>
</feature>
<feature type="transmembrane region" description="Helical" evidence="1">
    <location>
        <begin position="244"/>
        <end position="268"/>
    </location>
</feature>
<feature type="topological domain" description="Extracellular" evidence="1">
    <location>
        <begin position="269"/>
        <end position="286"/>
    </location>
</feature>
<feature type="transmembrane region" description="Helical" evidence="1">
    <location>
        <begin position="287"/>
        <end position="304"/>
    </location>
</feature>
<feature type="topological domain" description="Cytoplasmic" evidence="1">
    <location>
        <begin position="305"/>
        <end position="312"/>
    </location>
</feature>
<feature type="transmembrane region" description="Helical" evidence="1">
    <location>
        <begin position="313"/>
        <end position="332"/>
    </location>
</feature>
<feature type="topological domain" description="Extracellular" evidence="1">
    <location>
        <begin position="333"/>
        <end position="342"/>
    </location>
</feature>
<feature type="transmembrane region" description="Helical" evidence="1">
    <location>
        <begin position="343"/>
        <end position="362"/>
    </location>
</feature>
<feature type="topological domain" description="Cytoplasmic" evidence="1">
    <location>
        <begin position="363"/>
        <end position="370"/>
    </location>
</feature>
<feature type="transmembrane region" description="Helical" evidence="1">
    <location>
        <begin position="371"/>
        <end position="394"/>
    </location>
</feature>
<feature type="topological domain" description="Extracellular" evidence="1">
    <location>
        <begin position="395"/>
        <end position="408"/>
    </location>
</feature>
<feature type="transmembrane region" description="Helical" evidence="1">
    <location>
        <begin position="409"/>
        <end position="433"/>
    </location>
</feature>
<feature type="topological domain" description="Cytoplasmic" evidence="1">
    <location>
        <begin position="434"/>
        <end position="473"/>
    </location>
</feature>
<feature type="glycosylation site" description="N-linked (GlcNAc...) asparagine" evidence="1">
    <location>
        <position position="72"/>
    </location>
</feature>
<feature type="sequence conflict" description="In Ref. 1; CAA53552 and 2; CAA82066." evidence="2" ref="1 2">
    <original>A</original>
    <variation>R</variation>
    <location>
        <position position="342"/>
    </location>
</feature>
<accession>P36032</accession>
<accession>D6VWY2</accession>
<reference key="1">
    <citation type="journal article" date="1994" name="Yeast">
        <title>Sequencing of a 13.2 kb segment next to the left telomere of yeast chromosome XI revealed five open reading frames and recent recombination events with the right arms of chromosomes III and V.</title>
        <authorList>
            <person name="Alexandraki D."/>
            <person name="Tzermia M."/>
        </authorList>
    </citation>
    <scope>NUCLEOTIDE SEQUENCE [GENOMIC DNA]</scope>
    <source>
        <strain>ATCC 204508 / S288c</strain>
    </source>
</reference>
<reference key="2">
    <citation type="journal article" date="1994" name="Nature">
        <title>Complete DNA sequence of yeast chromosome XI.</title>
        <authorList>
            <person name="Dujon B."/>
            <person name="Alexandraki D."/>
            <person name="Andre B."/>
            <person name="Ansorge W."/>
            <person name="Baladron V."/>
            <person name="Ballesta J.P.G."/>
            <person name="Banrevi A."/>
            <person name="Bolle P.-A."/>
            <person name="Bolotin-Fukuhara M."/>
            <person name="Bossier P."/>
            <person name="Bou G."/>
            <person name="Boyer J."/>
            <person name="Buitrago M.J."/>
            <person name="Cheret G."/>
            <person name="Colleaux L."/>
            <person name="Daignan-Fornier B."/>
            <person name="del Rey F."/>
            <person name="Dion C."/>
            <person name="Domdey H."/>
            <person name="Duesterhoeft A."/>
            <person name="Duesterhus S."/>
            <person name="Entian K.-D."/>
            <person name="Erfle H."/>
            <person name="Esteban P.F."/>
            <person name="Feldmann H."/>
            <person name="Fernandes L."/>
            <person name="Fobo G.M."/>
            <person name="Fritz C."/>
            <person name="Fukuhara H."/>
            <person name="Gabel C."/>
            <person name="Gaillon L."/>
            <person name="Garcia-Cantalejo J.M."/>
            <person name="Garcia-Ramirez J.J."/>
            <person name="Gent M.E."/>
            <person name="Ghazvini M."/>
            <person name="Goffeau A."/>
            <person name="Gonzalez A."/>
            <person name="Grothues D."/>
            <person name="Guerreiro P."/>
            <person name="Hegemann J.H."/>
            <person name="Hewitt N."/>
            <person name="Hilger F."/>
            <person name="Hollenberg C.P."/>
            <person name="Horaitis O."/>
            <person name="Indge K.J."/>
            <person name="Jacquier A."/>
            <person name="James C.M."/>
            <person name="Jauniaux J.-C."/>
            <person name="Jimenez A."/>
            <person name="Keuchel H."/>
            <person name="Kirchrath L."/>
            <person name="Kleine K."/>
            <person name="Koetter P."/>
            <person name="Legrain P."/>
            <person name="Liebl S."/>
            <person name="Louis E.J."/>
            <person name="Maia e Silva A."/>
            <person name="Marck C."/>
            <person name="Monnier A.-L."/>
            <person name="Moestl D."/>
            <person name="Mueller S."/>
            <person name="Obermaier B."/>
            <person name="Oliver S.G."/>
            <person name="Pallier C."/>
            <person name="Pascolo S."/>
            <person name="Pfeiffer F."/>
            <person name="Philippsen P."/>
            <person name="Planta R.J."/>
            <person name="Pohl F.M."/>
            <person name="Pohl T.M."/>
            <person name="Poehlmann R."/>
            <person name="Portetelle D."/>
            <person name="Purnelle B."/>
            <person name="Puzos V."/>
            <person name="Ramezani Rad M."/>
            <person name="Rasmussen S.W."/>
            <person name="Remacha M.A."/>
            <person name="Revuelta J.L."/>
            <person name="Richard G.-F."/>
            <person name="Rieger M."/>
            <person name="Rodrigues-Pousada C."/>
            <person name="Rose M."/>
            <person name="Rupp T."/>
            <person name="Santos M.A."/>
            <person name="Schwager C."/>
            <person name="Sensen C."/>
            <person name="Skala J."/>
            <person name="Soares H."/>
            <person name="Sor F."/>
            <person name="Stegemann J."/>
            <person name="Tettelin H."/>
            <person name="Thierry A."/>
            <person name="Tzermia M."/>
            <person name="Urrestarazu L.A."/>
            <person name="van Dyck L."/>
            <person name="van Vliet-Reedijk J.C."/>
            <person name="Valens M."/>
            <person name="Vandenbol M."/>
            <person name="Vilela C."/>
            <person name="Vissers S."/>
            <person name="von Wettstein D."/>
            <person name="Voss H."/>
            <person name="Wiemann S."/>
            <person name="Xu G."/>
            <person name="Zimmermann J."/>
            <person name="Haasemann M."/>
            <person name="Becker I."/>
            <person name="Mewes H.-W."/>
        </authorList>
    </citation>
    <scope>NUCLEOTIDE SEQUENCE [LARGE SCALE GENOMIC DNA]</scope>
    <source>
        <strain>ATCC 204508 / S288c</strain>
    </source>
</reference>
<reference key="3">
    <citation type="journal article" date="2014" name="G3 (Bethesda)">
        <title>The reference genome sequence of Saccharomyces cerevisiae: Then and now.</title>
        <authorList>
            <person name="Engel S.R."/>
            <person name="Dietrich F.S."/>
            <person name="Fisk D.G."/>
            <person name="Binkley G."/>
            <person name="Balakrishnan R."/>
            <person name="Costanzo M.C."/>
            <person name="Dwight S.S."/>
            <person name="Hitz B.C."/>
            <person name="Karra K."/>
            <person name="Nash R.S."/>
            <person name="Weng S."/>
            <person name="Wong E.D."/>
            <person name="Lloyd P."/>
            <person name="Skrzypek M.S."/>
            <person name="Miyasato S.R."/>
            <person name="Simison M."/>
            <person name="Cherry J.M."/>
        </authorList>
    </citation>
    <scope>GENOME REANNOTATION</scope>
    <scope>SEQUENCE REVISION TO 342</scope>
    <source>
        <strain>ATCC 204508 / S288c</strain>
    </source>
</reference>
<reference key="4">
    <citation type="journal article" date="2001" name="Yeast">
        <title>The putative monocarboxylate permeases of the yeast Saccharomyces cerevisiae do not transport monocarboxylic acids across the plasma membrane.</title>
        <authorList>
            <person name="Makuc J."/>
            <person name="Paiva S."/>
            <person name="Schauen M."/>
            <person name="Kramer R."/>
            <person name="Andre B."/>
            <person name="Casal M."/>
            <person name="Leao C."/>
            <person name="Boles E."/>
        </authorList>
    </citation>
    <scope>LACK OF FUNCTION AS A MONOCARBOXYLATE TRANSPORTER</scope>
</reference>
<reference key="5">
    <citation type="journal article" date="2006" name="Proc. Natl. Acad. Sci. U.S.A.">
        <title>A global topology map of the Saccharomyces cerevisiae membrane proteome.</title>
        <authorList>
            <person name="Kim H."/>
            <person name="Melen K."/>
            <person name="Oesterberg M."/>
            <person name="von Heijne G."/>
        </authorList>
    </citation>
    <scope>TOPOLOGY [LARGE SCALE ANALYSIS]</scope>
    <source>
        <strain>ATCC 208353 / W303-1A</strain>
    </source>
</reference>
<name>MCH2_YEAST</name>